<evidence type="ECO:0000255" key="1">
    <source>
        <dbReference type="HAMAP-Rule" id="MF_00375"/>
    </source>
</evidence>
<protein>
    <recommendedName>
        <fullName evidence="1">Glutamate-1-semialdehyde 2,1-aminomutase</fullName>
        <shortName evidence="1">GSA</shortName>
        <ecNumber evidence="1">5.4.3.8</ecNumber>
    </recommendedName>
    <alternativeName>
        <fullName evidence="1">Glutamate-1-semialdehyde aminotransferase</fullName>
        <shortName evidence="1">GSA-AT</shortName>
    </alternativeName>
</protein>
<keyword id="KW-0963">Cytoplasm</keyword>
<keyword id="KW-0413">Isomerase</keyword>
<keyword id="KW-0627">Porphyrin biosynthesis</keyword>
<keyword id="KW-0663">Pyridoxal phosphate</keyword>
<gene>
    <name evidence="1" type="primary">hemL</name>
    <name type="ordered locus">Shal_1021</name>
</gene>
<comment type="catalytic activity">
    <reaction evidence="1">
        <text>(S)-4-amino-5-oxopentanoate = 5-aminolevulinate</text>
        <dbReference type="Rhea" id="RHEA:14265"/>
        <dbReference type="ChEBI" id="CHEBI:57501"/>
        <dbReference type="ChEBI" id="CHEBI:356416"/>
        <dbReference type="EC" id="5.4.3.8"/>
    </reaction>
</comment>
<comment type="cofactor">
    <cofactor evidence="1">
        <name>pyridoxal 5'-phosphate</name>
        <dbReference type="ChEBI" id="CHEBI:597326"/>
    </cofactor>
</comment>
<comment type="pathway">
    <text evidence="1">Porphyrin-containing compound metabolism; protoporphyrin-IX biosynthesis; 5-aminolevulinate from L-glutamyl-tRNA(Glu): step 2/2.</text>
</comment>
<comment type="subunit">
    <text evidence="1">Homodimer.</text>
</comment>
<comment type="subcellular location">
    <subcellularLocation>
        <location evidence="1">Cytoplasm</location>
    </subcellularLocation>
</comment>
<comment type="similarity">
    <text evidence="1">Belongs to the class-III pyridoxal-phosphate-dependent aminotransferase family. HemL subfamily.</text>
</comment>
<dbReference type="EC" id="5.4.3.8" evidence="1"/>
<dbReference type="EMBL" id="CP000931">
    <property type="protein sequence ID" value="ABZ75595.1"/>
    <property type="molecule type" value="Genomic_DNA"/>
</dbReference>
<dbReference type="RefSeq" id="WP_012276143.1">
    <property type="nucleotide sequence ID" value="NC_010334.1"/>
</dbReference>
<dbReference type="SMR" id="B0TIQ0"/>
<dbReference type="STRING" id="458817.Shal_1021"/>
<dbReference type="KEGG" id="shl:Shal_1021"/>
<dbReference type="eggNOG" id="COG0001">
    <property type="taxonomic scope" value="Bacteria"/>
</dbReference>
<dbReference type="HOGENOM" id="CLU_016922_1_5_6"/>
<dbReference type="OrthoDB" id="9801052at2"/>
<dbReference type="UniPathway" id="UPA00251">
    <property type="reaction ID" value="UER00317"/>
</dbReference>
<dbReference type="Proteomes" id="UP000001317">
    <property type="component" value="Chromosome"/>
</dbReference>
<dbReference type="GO" id="GO:0005737">
    <property type="term" value="C:cytoplasm"/>
    <property type="evidence" value="ECO:0007669"/>
    <property type="project" value="UniProtKB-SubCell"/>
</dbReference>
<dbReference type="GO" id="GO:0042286">
    <property type="term" value="F:glutamate-1-semialdehyde 2,1-aminomutase activity"/>
    <property type="evidence" value="ECO:0007669"/>
    <property type="project" value="UniProtKB-UniRule"/>
</dbReference>
<dbReference type="GO" id="GO:0030170">
    <property type="term" value="F:pyridoxal phosphate binding"/>
    <property type="evidence" value="ECO:0007669"/>
    <property type="project" value="InterPro"/>
</dbReference>
<dbReference type="GO" id="GO:0008483">
    <property type="term" value="F:transaminase activity"/>
    <property type="evidence" value="ECO:0007669"/>
    <property type="project" value="InterPro"/>
</dbReference>
<dbReference type="GO" id="GO:0006782">
    <property type="term" value="P:protoporphyrinogen IX biosynthetic process"/>
    <property type="evidence" value="ECO:0007669"/>
    <property type="project" value="UniProtKB-UniRule"/>
</dbReference>
<dbReference type="CDD" id="cd00610">
    <property type="entry name" value="OAT_like"/>
    <property type="match status" value="1"/>
</dbReference>
<dbReference type="FunFam" id="3.40.640.10:FF:000021">
    <property type="entry name" value="Glutamate-1-semialdehyde 2,1-aminomutase"/>
    <property type="match status" value="1"/>
</dbReference>
<dbReference type="FunFam" id="3.90.1150.10:FF:000012">
    <property type="entry name" value="Glutamate-1-semialdehyde 2,1-aminomutase"/>
    <property type="match status" value="1"/>
</dbReference>
<dbReference type="Gene3D" id="3.90.1150.10">
    <property type="entry name" value="Aspartate Aminotransferase, domain 1"/>
    <property type="match status" value="1"/>
</dbReference>
<dbReference type="Gene3D" id="3.40.640.10">
    <property type="entry name" value="Type I PLP-dependent aspartate aminotransferase-like (Major domain)"/>
    <property type="match status" value="1"/>
</dbReference>
<dbReference type="HAMAP" id="MF_00375">
    <property type="entry name" value="HemL_aminotrans_3"/>
    <property type="match status" value="1"/>
</dbReference>
<dbReference type="InterPro" id="IPR004639">
    <property type="entry name" value="4pyrrol_synth_GluAld_NH2Trfase"/>
</dbReference>
<dbReference type="InterPro" id="IPR005814">
    <property type="entry name" value="Aminotrans_3"/>
</dbReference>
<dbReference type="InterPro" id="IPR049704">
    <property type="entry name" value="Aminotrans_3_PPA_site"/>
</dbReference>
<dbReference type="InterPro" id="IPR015424">
    <property type="entry name" value="PyrdxlP-dep_Trfase"/>
</dbReference>
<dbReference type="InterPro" id="IPR015421">
    <property type="entry name" value="PyrdxlP-dep_Trfase_major"/>
</dbReference>
<dbReference type="InterPro" id="IPR015422">
    <property type="entry name" value="PyrdxlP-dep_Trfase_small"/>
</dbReference>
<dbReference type="NCBIfam" id="TIGR00713">
    <property type="entry name" value="hemL"/>
    <property type="match status" value="1"/>
</dbReference>
<dbReference type="NCBIfam" id="NF000818">
    <property type="entry name" value="PRK00062.1"/>
    <property type="match status" value="1"/>
</dbReference>
<dbReference type="PANTHER" id="PTHR43713">
    <property type="entry name" value="GLUTAMATE-1-SEMIALDEHYDE 2,1-AMINOMUTASE"/>
    <property type="match status" value="1"/>
</dbReference>
<dbReference type="PANTHER" id="PTHR43713:SF3">
    <property type="entry name" value="GLUTAMATE-1-SEMIALDEHYDE 2,1-AMINOMUTASE 1, CHLOROPLASTIC-RELATED"/>
    <property type="match status" value="1"/>
</dbReference>
<dbReference type="Pfam" id="PF00202">
    <property type="entry name" value="Aminotran_3"/>
    <property type="match status" value="1"/>
</dbReference>
<dbReference type="SUPFAM" id="SSF53383">
    <property type="entry name" value="PLP-dependent transferases"/>
    <property type="match status" value="1"/>
</dbReference>
<dbReference type="PROSITE" id="PS00600">
    <property type="entry name" value="AA_TRANSFER_CLASS_3"/>
    <property type="match status" value="1"/>
</dbReference>
<accession>B0TIQ0</accession>
<organism>
    <name type="scientific">Shewanella halifaxensis (strain HAW-EB4)</name>
    <dbReference type="NCBI Taxonomy" id="458817"/>
    <lineage>
        <taxon>Bacteria</taxon>
        <taxon>Pseudomonadati</taxon>
        <taxon>Pseudomonadota</taxon>
        <taxon>Gammaproteobacteria</taxon>
        <taxon>Alteromonadales</taxon>
        <taxon>Shewanellaceae</taxon>
        <taxon>Shewanella</taxon>
    </lineage>
</organism>
<feature type="chain" id="PRO_1000079933" description="Glutamate-1-semialdehyde 2,1-aminomutase">
    <location>
        <begin position="1"/>
        <end position="429"/>
    </location>
</feature>
<feature type="modified residue" description="N6-(pyridoxal phosphate)lysine" evidence="1">
    <location>
        <position position="265"/>
    </location>
</feature>
<reference key="1">
    <citation type="submission" date="2008-01" db="EMBL/GenBank/DDBJ databases">
        <title>Complete sequence of Shewanella halifaxensis HAW-EB4.</title>
        <authorList>
            <consortium name="US DOE Joint Genome Institute"/>
            <person name="Copeland A."/>
            <person name="Lucas S."/>
            <person name="Lapidus A."/>
            <person name="Glavina del Rio T."/>
            <person name="Dalin E."/>
            <person name="Tice H."/>
            <person name="Bruce D."/>
            <person name="Goodwin L."/>
            <person name="Pitluck S."/>
            <person name="Sims D."/>
            <person name="Brettin T."/>
            <person name="Detter J.C."/>
            <person name="Han C."/>
            <person name="Kuske C.R."/>
            <person name="Schmutz J."/>
            <person name="Larimer F."/>
            <person name="Land M."/>
            <person name="Hauser L."/>
            <person name="Kyrpides N."/>
            <person name="Kim E."/>
            <person name="Zhao J.-S."/>
            <person name="Richardson P."/>
        </authorList>
    </citation>
    <scope>NUCLEOTIDE SEQUENCE [LARGE SCALE GENOMIC DNA]</scope>
    <source>
        <strain>HAW-EB4</strain>
    </source>
</reference>
<name>GSA_SHEHH</name>
<proteinExistence type="inferred from homology"/>
<sequence length="429" mass="45836">MTRSDELFEQAKKTIPGGVNSPVRAFSGVGGSPRFIEKADGAYIFDADGKKYIDYVGSWGPMILGHNHPKIREAVLAAVENGLSFGAPTELEITMAEKVIEMVPSIEQVRMVSSGTEATMSAIRLARGFTNRDKILKFEGCYHGHADCLLVKAGSGALTLGQPSSPGIPEDFAKHTLTATYNDLDSVKAIFEQYPEEISCIIIEPVAGNMNCIPPIDGFLQGLRAICDQYGALMIIDEVMTGFRVSKSGAQGHYGVTPDLTTLGKVIGGGMPVGAFGGRKDVMQFIAPTGPVYQAGTLSGNPIAMSAGLAQMEALCEEGVYEQLAAKTQYIAEGFKAAANKHGIPMAINYVGGMFGFFFTDEATVTNFAQVTKCDTALFAEFYHLMLDEGVYLAPSAYEAGFLSLAHGEEELEATLAAADRVFAKLAKR</sequence>